<feature type="chain" id="PRO_0000440128" description="Protein MLN51 homolog">
    <location>
        <begin position="1"/>
        <end position="605"/>
    </location>
</feature>
<feature type="region of interest" description="Disordered" evidence="2">
    <location>
        <begin position="1"/>
        <end position="88"/>
    </location>
</feature>
<feature type="region of interest" description="Disordered" evidence="2">
    <location>
        <begin position="101"/>
        <end position="132"/>
    </location>
</feature>
<feature type="region of interest" description="Disordered" evidence="2">
    <location>
        <begin position="151"/>
        <end position="275"/>
    </location>
</feature>
<feature type="region of interest" description="Disordered" evidence="2">
    <location>
        <begin position="350"/>
        <end position="380"/>
    </location>
</feature>
<feature type="region of interest" description="Disordered" evidence="2">
    <location>
        <begin position="544"/>
        <end position="605"/>
    </location>
</feature>
<feature type="compositionally biased region" description="Acidic residues" evidence="2">
    <location>
        <begin position="1"/>
        <end position="16"/>
    </location>
</feature>
<feature type="compositionally biased region" description="Acidic residues" evidence="2">
    <location>
        <begin position="30"/>
        <end position="40"/>
    </location>
</feature>
<feature type="compositionally biased region" description="Basic and acidic residues" evidence="2">
    <location>
        <begin position="41"/>
        <end position="57"/>
    </location>
</feature>
<feature type="compositionally biased region" description="Acidic residues" evidence="2">
    <location>
        <begin position="75"/>
        <end position="87"/>
    </location>
</feature>
<feature type="compositionally biased region" description="Basic and acidic residues" evidence="2">
    <location>
        <begin position="166"/>
        <end position="192"/>
    </location>
</feature>
<feature type="compositionally biased region" description="Polar residues" evidence="2">
    <location>
        <begin position="214"/>
        <end position="228"/>
    </location>
</feature>
<feature type="compositionally biased region" description="Polar residues" evidence="2">
    <location>
        <begin position="247"/>
        <end position="265"/>
    </location>
</feature>
<feature type="compositionally biased region" description="Polar residues" evidence="2">
    <location>
        <begin position="367"/>
        <end position="380"/>
    </location>
</feature>
<feature type="compositionally biased region" description="Low complexity" evidence="2">
    <location>
        <begin position="552"/>
        <end position="567"/>
    </location>
</feature>
<feature type="compositionally biased region" description="Polar residues" evidence="2">
    <location>
        <begin position="578"/>
        <end position="593"/>
    </location>
</feature>
<feature type="modified residue" description="Phosphoserine" evidence="9">
    <location>
        <position position="30"/>
    </location>
</feature>
<dbReference type="EMBL" id="AC009322">
    <property type="protein sequence ID" value="AAD55481.1"/>
    <property type="status" value="ALT_SEQ"/>
    <property type="molecule type" value="Genomic_DNA"/>
</dbReference>
<dbReference type="EMBL" id="AC011717">
    <property type="protein sequence ID" value="AAG52246.1"/>
    <property type="status" value="ALT_SEQ"/>
    <property type="molecule type" value="Genomic_DNA"/>
</dbReference>
<dbReference type="EMBL" id="CP002684">
    <property type="protein sequence ID" value="AEE36342.1"/>
    <property type="molecule type" value="Genomic_DNA"/>
</dbReference>
<dbReference type="EMBL" id="CP002684">
    <property type="protein sequence ID" value="AEE36343.1"/>
    <property type="molecule type" value="Genomic_DNA"/>
</dbReference>
<dbReference type="EMBL" id="CP002684">
    <property type="protein sequence ID" value="ANM60522.1"/>
    <property type="molecule type" value="Genomic_DNA"/>
</dbReference>
<dbReference type="EMBL" id="AY057486">
    <property type="protein sequence ID" value="AAL09720.1"/>
    <property type="molecule type" value="mRNA"/>
</dbReference>
<dbReference type="EMBL" id="BT004550">
    <property type="protein sequence ID" value="AAO42796.1"/>
    <property type="molecule type" value="mRNA"/>
</dbReference>
<dbReference type="EMBL" id="AK317141">
    <property type="protein sequence ID" value="BAH19827.1"/>
    <property type="molecule type" value="mRNA"/>
</dbReference>
<dbReference type="PIR" id="D96831">
    <property type="entry name" value="D96831"/>
</dbReference>
<dbReference type="RefSeq" id="NP_001322803.1">
    <property type="nucleotide sequence ID" value="NM_001334946.1"/>
</dbReference>
<dbReference type="RefSeq" id="NP_565226.1">
    <property type="nucleotide sequence ID" value="NM_106649.3"/>
</dbReference>
<dbReference type="RefSeq" id="NP_974187.1">
    <property type="nucleotide sequence ID" value="NM_202458.2"/>
</dbReference>
<dbReference type="FunCoup" id="Q93ZJ9">
    <property type="interactions" value="1930"/>
</dbReference>
<dbReference type="IntAct" id="Q93ZJ9">
    <property type="interactions" value="16"/>
</dbReference>
<dbReference type="STRING" id="3702.Q93ZJ9"/>
<dbReference type="GlyGen" id="Q93ZJ9">
    <property type="glycosylation" value="1 site"/>
</dbReference>
<dbReference type="iPTMnet" id="Q93ZJ9"/>
<dbReference type="PaxDb" id="3702-AT1G80000.2"/>
<dbReference type="ProteomicsDB" id="251412"/>
<dbReference type="EnsemblPlants" id="AT1G80000.1">
    <property type="protein sequence ID" value="AT1G80000.1"/>
    <property type="gene ID" value="AT1G80000"/>
</dbReference>
<dbReference type="EnsemblPlants" id="AT1G80000.2">
    <property type="protein sequence ID" value="AT1G80000.2"/>
    <property type="gene ID" value="AT1G80000"/>
</dbReference>
<dbReference type="EnsemblPlants" id="AT1G80000.3">
    <property type="protein sequence ID" value="AT1G80000.3"/>
    <property type="gene ID" value="AT1G80000"/>
</dbReference>
<dbReference type="GeneID" id="844340"/>
<dbReference type="Gramene" id="AT1G80000.1">
    <property type="protein sequence ID" value="AT1G80000.1"/>
    <property type="gene ID" value="AT1G80000"/>
</dbReference>
<dbReference type="Gramene" id="AT1G80000.2">
    <property type="protein sequence ID" value="AT1G80000.2"/>
    <property type="gene ID" value="AT1G80000"/>
</dbReference>
<dbReference type="Gramene" id="AT1G80000.3">
    <property type="protein sequence ID" value="AT1G80000.3"/>
    <property type="gene ID" value="AT1G80000"/>
</dbReference>
<dbReference type="KEGG" id="ath:AT1G80000"/>
<dbReference type="Araport" id="AT1G80000"/>
<dbReference type="TAIR" id="AT1G80000">
    <property type="gene designation" value="BTZ1"/>
</dbReference>
<dbReference type="eggNOG" id="ENOG502SAIS">
    <property type="taxonomic scope" value="Eukaryota"/>
</dbReference>
<dbReference type="HOGENOM" id="CLU_016753_1_0_1"/>
<dbReference type="InParanoid" id="Q93ZJ9"/>
<dbReference type="OMA" id="ADEGLHI"/>
<dbReference type="PhylomeDB" id="Q93ZJ9"/>
<dbReference type="PRO" id="PR:Q93ZJ9"/>
<dbReference type="Proteomes" id="UP000006548">
    <property type="component" value="Chromosome 1"/>
</dbReference>
<dbReference type="ExpressionAtlas" id="Q93ZJ9">
    <property type="expression patterns" value="baseline and differential"/>
</dbReference>
<dbReference type="GO" id="GO:0005737">
    <property type="term" value="C:cytoplasm"/>
    <property type="evidence" value="ECO:0007669"/>
    <property type="project" value="UniProtKB-SubCell"/>
</dbReference>
<dbReference type="GO" id="GO:0035145">
    <property type="term" value="C:exon-exon junction complex"/>
    <property type="evidence" value="ECO:0007669"/>
    <property type="project" value="InterPro"/>
</dbReference>
<dbReference type="GO" id="GO:0003729">
    <property type="term" value="F:mRNA binding"/>
    <property type="evidence" value="ECO:0000314"/>
    <property type="project" value="TAIR"/>
</dbReference>
<dbReference type="GO" id="GO:0006397">
    <property type="term" value="P:mRNA processing"/>
    <property type="evidence" value="ECO:0007669"/>
    <property type="project" value="UniProtKB-KW"/>
</dbReference>
<dbReference type="GO" id="GO:0051028">
    <property type="term" value="P:mRNA transport"/>
    <property type="evidence" value="ECO:0007669"/>
    <property type="project" value="UniProtKB-KW"/>
</dbReference>
<dbReference type="GO" id="GO:0000184">
    <property type="term" value="P:nuclear-transcribed mRNA catabolic process, nonsense-mediated decay"/>
    <property type="evidence" value="ECO:0007669"/>
    <property type="project" value="UniProtKB-KW"/>
</dbReference>
<dbReference type="GO" id="GO:0006417">
    <property type="term" value="P:regulation of translation"/>
    <property type="evidence" value="ECO:0007669"/>
    <property type="project" value="UniProtKB-KW"/>
</dbReference>
<dbReference type="GO" id="GO:0008380">
    <property type="term" value="P:RNA splicing"/>
    <property type="evidence" value="ECO:0007669"/>
    <property type="project" value="UniProtKB-KW"/>
</dbReference>
<dbReference type="InterPro" id="IPR018545">
    <property type="entry name" value="Btz_dom"/>
</dbReference>
<dbReference type="InterPro" id="IPR044796">
    <property type="entry name" value="MLN51_plant"/>
</dbReference>
<dbReference type="PANTHER" id="PTHR46837">
    <property type="entry name" value="PROTEIN MLN51 HOMOLOG"/>
    <property type="match status" value="1"/>
</dbReference>
<dbReference type="PANTHER" id="PTHR46837:SF5">
    <property type="entry name" value="PROTEIN MLN51 HOMOLOG"/>
    <property type="match status" value="1"/>
</dbReference>
<dbReference type="Pfam" id="PF09405">
    <property type="entry name" value="Btz"/>
    <property type="match status" value="1"/>
</dbReference>
<dbReference type="SMART" id="SM01044">
    <property type="entry name" value="Btz"/>
    <property type="match status" value="1"/>
</dbReference>
<sequence length="605" mass="65693">MAPDGVEDSDYESDPDELNRSLATRRREASDDDEDDEEADDHDKLRAAIQIHSDEHSGVVVVDSDDNEGLHIEDSYGDDDDEEEDGDYGQVDDHVEYIADNNDKTIVAGNGTDDSAATDLVDGEEQKKKEPFAVPTAGAFYMHDDRFQELDAASNRRMRGGRRLWQSRDERKWGHDKFEEMNTQKQQYDRRTSRGRGRGRGQGRGQDRGQSRGNNSKEFTGNGHQNQFPKAVTRGRGARRYEVALRNGNQAPSVQTKQSQNSSVEVSHVDLGRPPTETATLETEAIQAKKNVFASSLNSASPPFYPSRSNNNLAQKDVQAGMGRLHINENPNPTGKKFGNTKSSSLWGRTAQTTSHGRGVPPHGQVLYQQSPNQGDKVSSPMQIRGMPKGTDQSCTQLPGQVFNQHSAVISLLPSSPPKTGSSENPYLSGEIESAVETGALVAKGKGSLQPSGRGSFMYGGTQFMGPAGMAAGHGNPNFPAFLPVMQFGGQHGGVPTFGMALPGYFQPEHGTGNPEMTWLPILAGPGALGGSYCPPYTVLDGSYQADKPGLPSSAGSSSQENSSNNPNDEEPMERPEVTNNGNSQRSNSNPNKQPRRYSEMSFSK</sequence>
<proteinExistence type="evidence at protein level"/>
<organism>
    <name type="scientific">Arabidopsis thaliana</name>
    <name type="common">Mouse-ear cress</name>
    <dbReference type="NCBI Taxonomy" id="3702"/>
    <lineage>
        <taxon>Eukaryota</taxon>
        <taxon>Viridiplantae</taxon>
        <taxon>Streptophyta</taxon>
        <taxon>Embryophyta</taxon>
        <taxon>Tracheophyta</taxon>
        <taxon>Spermatophyta</taxon>
        <taxon>Magnoliopsida</taxon>
        <taxon>eudicotyledons</taxon>
        <taxon>Gunneridae</taxon>
        <taxon>Pentapetalae</taxon>
        <taxon>rosids</taxon>
        <taxon>malvids</taxon>
        <taxon>Brassicales</taxon>
        <taxon>Brassicaceae</taxon>
        <taxon>Camelineae</taxon>
        <taxon>Arabidopsis</taxon>
    </lineage>
</organism>
<gene>
    <name evidence="4" type="primary">MLN51</name>
    <name evidence="5" type="synonym">CASC3</name>
    <name evidence="6" type="ordered locus">At1g80000</name>
    <name evidence="7" type="ORF">F18B13.8</name>
    <name evidence="8" type="ORF">F19K16.3</name>
</gene>
<evidence type="ECO:0000250" key="1">
    <source>
        <dbReference type="UniProtKB" id="O15234"/>
    </source>
</evidence>
<evidence type="ECO:0000256" key="2">
    <source>
        <dbReference type="SAM" id="MobiDB-lite"/>
    </source>
</evidence>
<evidence type="ECO:0000269" key="3">
    <source>
    </source>
</evidence>
<evidence type="ECO:0000303" key="4">
    <source>
    </source>
</evidence>
<evidence type="ECO:0000305" key="5"/>
<evidence type="ECO:0000312" key="6">
    <source>
        <dbReference type="Araport" id="AT1G80000"/>
    </source>
</evidence>
<evidence type="ECO:0000312" key="7">
    <source>
        <dbReference type="EMBL" id="AAD55481.1"/>
    </source>
</evidence>
<evidence type="ECO:0000312" key="8">
    <source>
        <dbReference type="EMBL" id="AAG52246.1"/>
    </source>
</evidence>
<evidence type="ECO:0007744" key="9">
    <source>
    </source>
</evidence>
<reference key="1">
    <citation type="journal article" date="2000" name="Nature">
        <title>Sequence and analysis of chromosome 1 of the plant Arabidopsis thaliana.</title>
        <authorList>
            <person name="Theologis A."/>
            <person name="Ecker J.R."/>
            <person name="Palm C.J."/>
            <person name="Federspiel N.A."/>
            <person name="Kaul S."/>
            <person name="White O."/>
            <person name="Alonso J."/>
            <person name="Altafi H."/>
            <person name="Araujo R."/>
            <person name="Bowman C.L."/>
            <person name="Brooks S.Y."/>
            <person name="Buehler E."/>
            <person name="Chan A."/>
            <person name="Chao Q."/>
            <person name="Chen H."/>
            <person name="Cheuk R.F."/>
            <person name="Chin C.W."/>
            <person name="Chung M.K."/>
            <person name="Conn L."/>
            <person name="Conway A.B."/>
            <person name="Conway A.R."/>
            <person name="Creasy T.H."/>
            <person name="Dewar K."/>
            <person name="Dunn P."/>
            <person name="Etgu P."/>
            <person name="Feldblyum T.V."/>
            <person name="Feng J.-D."/>
            <person name="Fong B."/>
            <person name="Fujii C.Y."/>
            <person name="Gill J.E."/>
            <person name="Goldsmith A.D."/>
            <person name="Haas B."/>
            <person name="Hansen N.F."/>
            <person name="Hughes B."/>
            <person name="Huizar L."/>
            <person name="Hunter J.L."/>
            <person name="Jenkins J."/>
            <person name="Johnson-Hopson C."/>
            <person name="Khan S."/>
            <person name="Khaykin E."/>
            <person name="Kim C.J."/>
            <person name="Koo H.L."/>
            <person name="Kremenetskaia I."/>
            <person name="Kurtz D.B."/>
            <person name="Kwan A."/>
            <person name="Lam B."/>
            <person name="Langin-Hooper S."/>
            <person name="Lee A."/>
            <person name="Lee J.M."/>
            <person name="Lenz C.A."/>
            <person name="Li J.H."/>
            <person name="Li Y.-P."/>
            <person name="Lin X."/>
            <person name="Liu S.X."/>
            <person name="Liu Z.A."/>
            <person name="Luros J.S."/>
            <person name="Maiti R."/>
            <person name="Marziali A."/>
            <person name="Militscher J."/>
            <person name="Miranda M."/>
            <person name="Nguyen M."/>
            <person name="Nierman W.C."/>
            <person name="Osborne B.I."/>
            <person name="Pai G."/>
            <person name="Peterson J."/>
            <person name="Pham P.K."/>
            <person name="Rizzo M."/>
            <person name="Rooney T."/>
            <person name="Rowley D."/>
            <person name="Sakano H."/>
            <person name="Salzberg S.L."/>
            <person name="Schwartz J.R."/>
            <person name="Shinn P."/>
            <person name="Southwick A.M."/>
            <person name="Sun H."/>
            <person name="Tallon L.J."/>
            <person name="Tambunga G."/>
            <person name="Toriumi M.J."/>
            <person name="Town C.D."/>
            <person name="Utterback T."/>
            <person name="Van Aken S."/>
            <person name="Vaysberg M."/>
            <person name="Vysotskaia V.S."/>
            <person name="Walker M."/>
            <person name="Wu D."/>
            <person name="Yu G."/>
            <person name="Fraser C.M."/>
            <person name="Venter J.C."/>
            <person name="Davis R.W."/>
        </authorList>
    </citation>
    <scope>NUCLEOTIDE SEQUENCE [LARGE SCALE GENOMIC DNA]</scope>
    <source>
        <strain>cv. Columbia</strain>
    </source>
</reference>
<reference key="2">
    <citation type="journal article" date="2017" name="Plant J.">
        <title>Araport11: a complete reannotation of the Arabidopsis thaliana reference genome.</title>
        <authorList>
            <person name="Cheng C.Y."/>
            <person name="Krishnakumar V."/>
            <person name="Chan A.P."/>
            <person name="Thibaud-Nissen F."/>
            <person name="Schobel S."/>
            <person name="Town C.D."/>
        </authorList>
    </citation>
    <scope>GENOME REANNOTATION</scope>
    <source>
        <strain>cv. Columbia</strain>
    </source>
</reference>
<reference key="3">
    <citation type="journal article" date="2003" name="Science">
        <title>Empirical analysis of transcriptional activity in the Arabidopsis genome.</title>
        <authorList>
            <person name="Yamada K."/>
            <person name="Lim J."/>
            <person name="Dale J.M."/>
            <person name="Chen H."/>
            <person name="Shinn P."/>
            <person name="Palm C.J."/>
            <person name="Southwick A.M."/>
            <person name="Wu H.C."/>
            <person name="Kim C.J."/>
            <person name="Nguyen M."/>
            <person name="Pham P.K."/>
            <person name="Cheuk R.F."/>
            <person name="Karlin-Newmann G."/>
            <person name="Liu S.X."/>
            <person name="Lam B."/>
            <person name="Sakano H."/>
            <person name="Wu T."/>
            <person name="Yu G."/>
            <person name="Miranda M."/>
            <person name="Quach H.L."/>
            <person name="Tripp M."/>
            <person name="Chang C.H."/>
            <person name="Lee J.M."/>
            <person name="Toriumi M.J."/>
            <person name="Chan M.M."/>
            <person name="Tang C.C."/>
            <person name="Onodera C.S."/>
            <person name="Deng J.M."/>
            <person name="Akiyama K."/>
            <person name="Ansari Y."/>
            <person name="Arakawa T."/>
            <person name="Banh J."/>
            <person name="Banno F."/>
            <person name="Bowser L."/>
            <person name="Brooks S.Y."/>
            <person name="Carninci P."/>
            <person name="Chao Q."/>
            <person name="Choy N."/>
            <person name="Enju A."/>
            <person name="Goldsmith A.D."/>
            <person name="Gurjal M."/>
            <person name="Hansen N.F."/>
            <person name="Hayashizaki Y."/>
            <person name="Johnson-Hopson C."/>
            <person name="Hsuan V.W."/>
            <person name="Iida K."/>
            <person name="Karnes M."/>
            <person name="Khan S."/>
            <person name="Koesema E."/>
            <person name="Ishida J."/>
            <person name="Jiang P.X."/>
            <person name="Jones T."/>
            <person name="Kawai J."/>
            <person name="Kamiya A."/>
            <person name="Meyers C."/>
            <person name="Nakajima M."/>
            <person name="Narusaka M."/>
            <person name="Seki M."/>
            <person name="Sakurai T."/>
            <person name="Satou M."/>
            <person name="Tamse R."/>
            <person name="Vaysberg M."/>
            <person name="Wallender E.K."/>
            <person name="Wong C."/>
            <person name="Yamamura Y."/>
            <person name="Yuan S."/>
            <person name="Shinozaki K."/>
            <person name="Davis R.W."/>
            <person name="Theologis A."/>
            <person name="Ecker J.R."/>
        </authorList>
    </citation>
    <scope>NUCLEOTIDE SEQUENCE [LARGE SCALE MRNA]</scope>
    <source>
        <strain>cv. Columbia</strain>
    </source>
</reference>
<reference key="4">
    <citation type="journal article" date="2009" name="DNA Res.">
        <title>Analysis of multiple occurrences of alternative splicing events in Arabidopsis thaliana using novel sequenced full-length cDNAs.</title>
        <authorList>
            <person name="Iida K."/>
            <person name="Fukami-Kobayashi K."/>
            <person name="Toyoda A."/>
            <person name="Sakaki Y."/>
            <person name="Kobayashi M."/>
            <person name="Seki M."/>
            <person name="Shinozaki K."/>
        </authorList>
    </citation>
    <scope>NUCLEOTIDE SEQUENCE [LARGE SCALE MRNA]</scope>
    <source>
        <strain>cv. Columbia</strain>
    </source>
</reference>
<reference key="5">
    <citation type="journal article" date="2009" name="Plant Cell">
        <title>Dynamic behavior of Arabidopsis eIF4A-III, putative core protein of exon junction complex: fast relocation to nucleolus and splicing speckles under hypoxia.</title>
        <authorList>
            <person name="Koroleva O.A."/>
            <person name="Calder G."/>
            <person name="Pendle A.F."/>
            <person name="Kim S.H."/>
            <person name="Lewandowska D."/>
            <person name="Simpson C.G."/>
            <person name="Jones I.M."/>
            <person name="Brown J.W.S."/>
            <person name="Shaw P.J."/>
        </authorList>
    </citation>
    <scope>INTERACTION WITH EIF4A3</scope>
</reference>
<reference key="6">
    <citation type="journal article" date="2009" name="Plant Physiol.">
        <title>Large-scale Arabidopsis phosphoproteome profiling reveals novel chloroplast kinase substrates and phosphorylation networks.</title>
        <authorList>
            <person name="Reiland S."/>
            <person name="Messerli G."/>
            <person name="Baerenfaller K."/>
            <person name="Gerrits B."/>
            <person name="Endler A."/>
            <person name="Grossmann J."/>
            <person name="Gruissem W."/>
            <person name="Baginsky S."/>
        </authorList>
    </citation>
    <scope>PHOSPHORYLATION [LARGE SCALE ANALYSIS] AT SER-30</scope>
    <scope>IDENTIFICATION BY MASS SPECTROMETRY [LARGE SCALE ANALYSIS]</scope>
</reference>
<keyword id="KW-0963">Cytoplasm</keyword>
<keyword id="KW-0507">mRNA processing</keyword>
<keyword id="KW-0508">mRNA splicing</keyword>
<keyword id="KW-0509">mRNA transport</keyword>
<keyword id="KW-0866">Nonsense-mediated mRNA decay</keyword>
<keyword id="KW-0539">Nucleus</keyword>
<keyword id="KW-0597">Phosphoprotein</keyword>
<keyword id="KW-1185">Reference proteome</keyword>
<keyword id="KW-0694">RNA-binding</keyword>
<keyword id="KW-0810">Translation regulation</keyword>
<keyword id="KW-0813">Transport</keyword>
<comment type="function">
    <text evidence="1">Core component of the splicing-dependent multiprotein exon junction complex (EJC) deposited at splice junctions on mRNAs. The EJC is a dynamic structure consisting of core proteins and several peripheral nuclear and cytoplasmic associated factors that join the complex only transiently either during EJC assembly or during subsequent mRNA metabolism. The EJC marks the position of the exon-exon junction in the mature mRNA for the gene expression machinery and the core components remain bound to spliced mRNAs throughout all stages of mRNA metabolism thereby influencing downstream processes including nuclear mRNA export, subcellular mRNA localization, translation efficiency and nonsense-mediated mRNA decay (NMD). Stimulates the ATPase and RNA-helicase activities of EIF4A3.</text>
</comment>
<comment type="subunit">
    <text evidence="3">Weakly interacts with EIF4A3.</text>
</comment>
<comment type="subcellular location">
    <subcellularLocation>
        <location evidence="1">Nucleus</location>
    </subcellularLocation>
    <subcellularLocation>
        <location evidence="1">Cytoplasm</location>
    </subcellularLocation>
    <text evidence="1">Nucleocytoplasmic shuttling protein. Travels to the cytoplasm as part of the exon junction complex (EJC) bound to mRNA.</text>
</comment>
<comment type="similarity">
    <text evidence="5">Belongs to the CASC3 family.</text>
</comment>
<comment type="sequence caution" evidence="5">
    <conflict type="erroneous gene model prediction">
        <sequence resource="EMBL-CDS" id="AAD55481"/>
    </conflict>
</comment>
<comment type="sequence caution" evidence="5">
    <conflict type="erroneous gene model prediction">
        <sequence resource="EMBL-CDS" id="AAG52246"/>
    </conflict>
</comment>
<protein>
    <recommendedName>
        <fullName>Protein MLN51 homolog</fullName>
    </recommendedName>
    <alternativeName>
        <fullName evidence="5">Protein CASC3 homolog</fullName>
    </alternativeName>
    <alternativeName>
        <fullName evidence="5">Protein barentsz</fullName>
        <shortName evidence="5">Btz</shortName>
    </alternativeName>
</protein>
<name>MLN51_ARATH</name>
<accession>Q93ZJ9</accession>
<accession>Q9S770</accession>